<organism>
    <name type="scientific">Geobacillus sp. (strain WCH70)</name>
    <dbReference type="NCBI Taxonomy" id="471223"/>
    <lineage>
        <taxon>Bacteria</taxon>
        <taxon>Bacillati</taxon>
        <taxon>Bacillota</taxon>
        <taxon>Bacilli</taxon>
        <taxon>Bacillales</taxon>
        <taxon>Anoxybacillaceae</taxon>
        <taxon>Geobacillus</taxon>
    </lineage>
</organism>
<dbReference type="EMBL" id="CP001638">
    <property type="protein sequence ID" value="ACS23085.1"/>
    <property type="molecule type" value="Genomic_DNA"/>
</dbReference>
<dbReference type="SMR" id="C5D3V1"/>
<dbReference type="STRING" id="471223.GWCH70_0145"/>
<dbReference type="KEGG" id="gwc:GWCH70_0145"/>
<dbReference type="eggNOG" id="COG0103">
    <property type="taxonomic scope" value="Bacteria"/>
</dbReference>
<dbReference type="HOGENOM" id="CLU_046483_2_1_9"/>
<dbReference type="OrthoDB" id="9803965at2"/>
<dbReference type="GO" id="GO:0022627">
    <property type="term" value="C:cytosolic small ribosomal subunit"/>
    <property type="evidence" value="ECO:0007669"/>
    <property type="project" value="TreeGrafter"/>
</dbReference>
<dbReference type="GO" id="GO:0003723">
    <property type="term" value="F:RNA binding"/>
    <property type="evidence" value="ECO:0007669"/>
    <property type="project" value="TreeGrafter"/>
</dbReference>
<dbReference type="GO" id="GO:0003735">
    <property type="term" value="F:structural constituent of ribosome"/>
    <property type="evidence" value="ECO:0007669"/>
    <property type="project" value="InterPro"/>
</dbReference>
<dbReference type="GO" id="GO:0006412">
    <property type="term" value="P:translation"/>
    <property type="evidence" value="ECO:0007669"/>
    <property type="project" value="UniProtKB-UniRule"/>
</dbReference>
<dbReference type="FunFam" id="3.30.230.10:FF:000001">
    <property type="entry name" value="30S ribosomal protein S9"/>
    <property type="match status" value="1"/>
</dbReference>
<dbReference type="Gene3D" id="3.30.230.10">
    <property type="match status" value="1"/>
</dbReference>
<dbReference type="HAMAP" id="MF_00532_B">
    <property type="entry name" value="Ribosomal_uS9_B"/>
    <property type="match status" value="1"/>
</dbReference>
<dbReference type="InterPro" id="IPR020568">
    <property type="entry name" value="Ribosomal_Su5_D2-typ_SF"/>
</dbReference>
<dbReference type="InterPro" id="IPR000754">
    <property type="entry name" value="Ribosomal_uS9"/>
</dbReference>
<dbReference type="InterPro" id="IPR023035">
    <property type="entry name" value="Ribosomal_uS9_bac/plastid"/>
</dbReference>
<dbReference type="InterPro" id="IPR020574">
    <property type="entry name" value="Ribosomal_uS9_CS"/>
</dbReference>
<dbReference type="InterPro" id="IPR014721">
    <property type="entry name" value="Ribsml_uS5_D2-typ_fold_subgr"/>
</dbReference>
<dbReference type="NCBIfam" id="NF001099">
    <property type="entry name" value="PRK00132.1"/>
    <property type="match status" value="1"/>
</dbReference>
<dbReference type="PANTHER" id="PTHR21569">
    <property type="entry name" value="RIBOSOMAL PROTEIN S9"/>
    <property type="match status" value="1"/>
</dbReference>
<dbReference type="PANTHER" id="PTHR21569:SF1">
    <property type="entry name" value="SMALL RIBOSOMAL SUBUNIT PROTEIN US9M"/>
    <property type="match status" value="1"/>
</dbReference>
<dbReference type="Pfam" id="PF00380">
    <property type="entry name" value="Ribosomal_S9"/>
    <property type="match status" value="1"/>
</dbReference>
<dbReference type="SUPFAM" id="SSF54211">
    <property type="entry name" value="Ribosomal protein S5 domain 2-like"/>
    <property type="match status" value="1"/>
</dbReference>
<dbReference type="PROSITE" id="PS00360">
    <property type="entry name" value="RIBOSOMAL_S9"/>
    <property type="match status" value="1"/>
</dbReference>
<comment type="similarity">
    <text evidence="1">Belongs to the universal ribosomal protein uS9 family.</text>
</comment>
<gene>
    <name evidence="1" type="primary">rpsI</name>
    <name type="ordered locus">GWCH70_0145</name>
</gene>
<proteinExistence type="inferred from homology"/>
<sequence>MAQVQYYGTGRRKSSVARVRLVPGDGRIVINDRDIRDYIPSEALIEVVKQPLVLTETLGNYDVLVNVKGGGFSGQAGAIRHGIARALLQVDPDYRPVLKRAGLLTRDARVKERKKYGLKGARRAPQFSKR</sequence>
<protein>
    <recommendedName>
        <fullName evidence="1">Small ribosomal subunit protein uS9</fullName>
    </recommendedName>
    <alternativeName>
        <fullName evidence="2">30S ribosomal protein S9</fullName>
    </alternativeName>
</protein>
<reference key="1">
    <citation type="submission" date="2009-06" db="EMBL/GenBank/DDBJ databases">
        <title>Complete sequence of chromosome of Geopacillus sp. WCH70.</title>
        <authorList>
            <consortium name="US DOE Joint Genome Institute"/>
            <person name="Lucas S."/>
            <person name="Copeland A."/>
            <person name="Lapidus A."/>
            <person name="Glavina del Rio T."/>
            <person name="Dalin E."/>
            <person name="Tice H."/>
            <person name="Bruce D."/>
            <person name="Goodwin L."/>
            <person name="Pitluck S."/>
            <person name="Chertkov O."/>
            <person name="Brettin T."/>
            <person name="Detter J.C."/>
            <person name="Han C."/>
            <person name="Larimer F."/>
            <person name="Land M."/>
            <person name="Hauser L."/>
            <person name="Kyrpides N."/>
            <person name="Mikhailova N."/>
            <person name="Brumm P."/>
            <person name="Mead D.A."/>
            <person name="Richardson P."/>
        </authorList>
    </citation>
    <scope>NUCLEOTIDE SEQUENCE [LARGE SCALE GENOMIC DNA]</scope>
    <source>
        <strain>WCH70</strain>
    </source>
</reference>
<feature type="chain" id="PRO_1000211836" description="Small ribosomal subunit protein uS9">
    <location>
        <begin position="1"/>
        <end position="130"/>
    </location>
</feature>
<keyword id="KW-0687">Ribonucleoprotein</keyword>
<keyword id="KW-0689">Ribosomal protein</keyword>
<accession>C5D3V1</accession>
<name>RS9_GEOSW</name>
<evidence type="ECO:0000255" key="1">
    <source>
        <dbReference type="HAMAP-Rule" id="MF_00532"/>
    </source>
</evidence>
<evidence type="ECO:0000305" key="2"/>